<sequence length="197" mass="20141">MRVLGVDPGLTRCGLGVVDGALGSRARLVEAGVVRTPAGAEVADRLRAVADGIDAWLDRTRPDAVAVEKVFSQANVRTVMGTAQAGAVAIMLAARRDLPVGLYTPSEVKAAVTGSGRADKAQVGFMVTRLLGLAEVPRPADAADALALALCHLWRGPALARLRAAAPAAPVSRPAPATPARRSPRPAAPARRPAGAS</sequence>
<evidence type="ECO:0000255" key="1">
    <source>
        <dbReference type="HAMAP-Rule" id="MF_00034"/>
    </source>
</evidence>
<evidence type="ECO:0000256" key="2">
    <source>
        <dbReference type="SAM" id="MobiDB-lite"/>
    </source>
</evidence>
<organism>
    <name type="scientific">Frankia alni (strain DSM 45986 / CECT 9034 / ACN14a)</name>
    <dbReference type="NCBI Taxonomy" id="326424"/>
    <lineage>
        <taxon>Bacteria</taxon>
        <taxon>Bacillati</taxon>
        <taxon>Actinomycetota</taxon>
        <taxon>Actinomycetes</taxon>
        <taxon>Frankiales</taxon>
        <taxon>Frankiaceae</taxon>
        <taxon>Frankia</taxon>
    </lineage>
</organism>
<protein>
    <recommendedName>
        <fullName evidence="1">Crossover junction endodeoxyribonuclease RuvC</fullName>
        <ecNumber evidence="1">3.1.21.10</ecNumber>
    </recommendedName>
    <alternativeName>
        <fullName evidence="1">Holliday junction nuclease RuvC</fullName>
    </alternativeName>
    <alternativeName>
        <fullName evidence="1">Holliday junction resolvase RuvC</fullName>
    </alternativeName>
</protein>
<keyword id="KW-0963">Cytoplasm</keyword>
<keyword id="KW-0227">DNA damage</keyword>
<keyword id="KW-0233">DNA recombination</keyword>
<keyword id="KW-0234">DNA repair</keyword>
<keyword id="KW-0238">DNA-binding</keyword>
<keyword id="KW-0255">Endonuclease</keyword>
<keyword id="KW-0378">Hydrolase</keyword>
<keyword id="KW-0460">Magnesium</keyword>
<keyword id="KW-0479">Metal-binding</keyword>
<keyword id="KW-0540">Nuclease</keyword>
<keyword id="KW-1185">Reference proteome</keyword>
<feature type="chain" id="PRO_0000332419" description="Crossover junction endodeoxyribonuclease RuvC">
    <location>
        <begin position="1"/>
        <end position="197"/>
    </location>
</feature>
<feature type="region of interest" description="Disordered" evidence="2">
    <location>
        <begin position="165"/>
        <end position="197"/>
    </location>
</feature>
<feature type="compositionally biased region" description="Low complexity" evidence="2">
    <location>
        <begin position="165"/>
        <end position="181"/>
    </location>
</feature>
<feature type="compositionally biased region" description="Low complexity" evidence="2">
    <location>
        <begin position="188"/>
        <end position="197"/>
    </location>
</feature>
<feature type="active site" evidence="1">
    <location>
        <position position="7"/>
    </location>
</feature>
<feature type="active site" evidence="1">
    <location>
        <position position="68"/>
    </location>
</feature>
<feature type="active site" evidence="1">
    <location>
        <position position="141"/>
    </location>
</feature>
<feature type="binding site" evidence="1">
    <location>
        <position position="7"/>
    </location>
    <ligand>
        <name>Mg(2+)</name>
        <dbReference type="ChEBI" id="CHEBI:18420"/>
        <label>1</label>
    </ligand>
</feature>
<feature type="binding site" evidence="1">
    <location>
        <position position="68"/>
    </location>
    <ligand>
        <name>Mg(2+)</name>
        <dbReference type="ChEBI" id="CHEBI:18420"/>
        <label>2</label>
    </ligand>
</feature>
<feature type="binding site" evidence="1">
    <location>
        <position position="141"/>
    </location>
    <ligand>
        <name>Mg(2+)</name>
        <dbReference type="ChEBI" id="CHEBI:18420"/>
        <label>1</label>
    </ligand>
</feature>
<reference key="1">
    <citation type="journal article" date="2007" name="Genome Res.">
        <title>Genome characteristics of facultatively symbiotic Frankia sp. strains reflect host range and host plant biogeography.</title>
        <authorList>
            <person name="Normand P."/>
            <person name="Lapierre P."/>
            <person name="Tisa L.S."/>
            <person name="Gogarten J.P."/>
            <person name="Alloisio N."/>
            <person name="Bagnarol E."/>
            <person name="Bassi C.A."/>
            <person name="Berry A.M."/>
            <person name="Bickhart D.M."/>
            <person name="Choisne N."/>
            <person name="Couloux A."/>
            <person name="Cournoyer B."/>
            <person name="Cruveiller S."/>
            <person name="Daubin V."/>
            <person name="Demange N."/>
            <person name="Francino M.P."/>
            <person name="Goltsman E."/>
            <person name="Huang Y."/>
            <person name="Kopp O.R."/>
            <person name="Labarre L."/>
            <person name="Lapidus A."/>
            <person name="Lavire C."/>
            <person name="Marechal J."/>
            <person name="Martinez M."/>
            <person name="Mastronunzio J.E."/>
            <person name="Mullin B.C."/>
            <person name="Niemann J."/>
            <person name="Pujic P."/>
            <person name="Rawnsley T."/>
            <person name="Rouy Z."/>
            <person name="Schenowitz C."/>
            <person name="Sellstedt A."/>
            <person name="Tavares F."/>
            <person name="Tomkins J.P."/>
            <person name="Vallenet D."/>
            <person name="Valverde C."/>
            <person name="Wall L.G."/>
            <person name="Wang Y."/>
            <person name="Medigue C."/>
            <person name="Benson D.R."/>
        </authorList>
    </citation>
    <scope>NUCLEOTIDE SEQUENCE [LARGE SCALE GENOMIC DNA]</scope>
    <source>
        <strain>DSM 45986 / CECT 9034 / ACN14a</strain>
    </source>
</reference>
<accession>Q0RNU8</accession>
<name>RUVC_FRAAA</name>
<dbReference type="EC" id="3.1.21.10" evidence="1"/>
<dbReference type="EMBL" id="CT573213">
    <property type="protein sequence ID" value="CAJ60788.1"/>
    <property type="molecule type" value="Genomic_DNA"/>
</dbReference>
<dbReference type="RefSeq" id="WP_011603304.1">
    <property type="nucleotide sequence ID" value="NC_008278.1"/>
</dbReference>
<dbReference type="SMR" id="Q0RNU8"/>
<dbReference type="STRING" id="326424.FRAAL2139"/>
<dbReference type="KEGG" id="fal:FRAAL2139"/>
<dbReference type="eggNOG" id="COG0817">
    <property type="taxonomic scope" value="Bacteria"/>
</dbReference>
<dbReference type="HOGENOM" id="CLU_091257_0_2_11"/>
<dbReference type="OrthoDB" id="9805499at2"/>
<dbReference type="Proteomes" id="UP000000657">
    <property type="component" value="Chromosome"/>
</dbReference>
<dbReference type="GO" id="GO:0005737">
    <property type="term" value="C:cytoplasm"/>
    <property type="evidence" value="ECO:0007669"/>
    <property type="project" value="UniProtKB-SubCell"/>
</dbReference>
<dbReference type="GO" id="GO:0048476">
    <property type="term" value="C:Holliday junction resolvase complex"/>
    <property type="evidence" value="ECO:0007669"/>
    <property type="project" value="UniProtKB-UniRule"/>
</dbReference>
<dbReference type="GO" id="GO:0008821">
    <property type="term" value="F:crossover junction DNA endonuclease activity"/>
    <property type="evidence" value="ECO:0007669"/>
    <property type="project" value="UniProtKB-UniRule"/>
</dbReference>
<dbReference type="GO" id="GO:0003677">
    <property type="term" value="F:DNA binding"/>
    <property type="evidence" value="ECO:0007669"/>
    <property type="project" value="UniProtKB-KW"/>
</dbReference>
<dbReference type="GO" id="GO:0000287">
    <property type="term" value="F:magnesium ion binding"/>
    <property type="evidence" value="ECO:0007669"/>
    <property type="project" value="UniProtKB-UniRule"/>
</dbReference>
<dbReference type="GO" id="GO:0006310">
    <property type="term" value="P:DNA recombination"/>
    <property type="evidence" value="ECO:0007669"/>
    <property type="project" value="UniProtKB-UniRule"/>
</dbReference>
<dbReference type="GO" id="GO:0006281">
    <property type="term" value="P:DNA repair"/>
    <property type="evidence" value="ECO:0007669"/>
    <property type="project" value="UniProtKB-UniRule"/>
</dbReference>
<dbReference type="CDD" id="cd16962">
    <property type="entry name" value="RuvC"/>
    <property type="match status" value="1"/>
</dbReference>
<dbReference type="FunFam" id="3.30.420.10:FF:000002">
    <property type="entry name" value="Crossover junction endodeoxyribonuclease RuvC"/>
    <property type="match status" value="1"/>
</dbReference>
<dbReference type="Gene3D" id="3.30.420.10">
    <property type="entry name" value="Ribonuclease H-like superfamily/Ribonuclease H"/>
    <property type="match status" value="1"/>
</dbReference>
<dbReference type="HAMAP" id="MF_00034">
    <property type="entry name" value="RuvC"/>
    <property type="match status" value="1"/>
</dbReference>
<dbReference type="InterPro" id="IPR012337">
    <property type="entry name" value="RNaseH-like_sf"/>
</dbReference>
<dbReference type="InterPro" id="IPR036397">
    <property type="entry name" value="RNaseH_sf"/>
</dbReference>
<dbReference type="InterPro" id="IPR020563">
    <property type="entry name" value="X-over_junc_endoDNase_Mg_BS"/>
</dbReference>
<dbReference type="InterPro" id="IPR002176">
    <property type="entry name" value="X-over_junc_endoDNase_RuvC"/>
</dbReference>
<dbReference type="NCBIfam" id="TIGR00228">
    <property type="entry name" value="ruvC"/>
    <property type="match status" value="1"/>
</dbReference>
<dbReference type="PANTHER" id="PTHR30194">
    <property type="entry name" value="CROSSOVER JUNCTION ENDODEOXYRIBONUCLEASE RUVC"/>
    <property type="match status" value="1"/>
</dbReference>
<dbReference type="PANTHER" id="PTHR30194:SF3">
    <property type="entry name" value="CROSSOVER JUNCTION ENDODEOXYRIBONUCLEASE RUVC"/>
    <property type="match status" value="1"/>
</dbReference>
<dbReference type="Pfam" id="PF02075">
    <property type="entry name" value="RuvC"/>
    <property type="match status" value="1"/>
</dbReference>
<dbReference type="PRINTS" id="PR00696">
    <property type="entry name" value="RSOLVASERUVC"/>
</dbReference>
<dbReference type="SUPFAM" id="SSF53098">
    <property type="entry name" value="Ribonuclease H-like"/>
    <property type="match status" value="1"/>
</dbReference>
<dbReference type="PROSITE" id="PS01321">
    <property type="entry name" value="RUVC"/>
    <property type="match status" value="1"/>
</dbReference>
<comment type="function">
    <text evidence="1">The RuvA-RuvB-RuvC complex processes Holliday junction (HJ) DNA during genetic recombination and DNA repair. Endonuclease that resolves HJ intermediates. Cleaves cruciform DNA by making single-stranded nicks across the HJ at symmetrical positions within the homologous arms, yielding a 5'-phosphate and a 3'-hydroxyl group; requires a central core of homology in the junction. The consensus cleavage sequence is 5'-(A/T)TT(C/G)-3'. Cleavage occurs on the 3'-side of the TT dinucleotide at the point of strand exchange. HJ branch migration catalyzed by RuvA-RuvB allows RuvC to scan DNA until it finds its consensus sequence, where it cleaves and resolves the cruciform DNA.</text>
</comment>
<comment type="catalytic activity">
    <reaction evidence="1">
        <text>Endonucleolytic cleavage at a junction such as a reciprocal single-stranded crossover between two homologous DNA duplexes (Holliday junction).</text>
        <dbReference type="EC" id="3.1.21.10"/>
    </reaction>
</comment>
<comment type="cofactor">
    <cofactor evidence="1">
        <name>Mg(2+)</name>
        <dbReference type="ChEBI" id="CHEBI:18420"/>
    </cofactor>
    <text evidence="1">Binds 2 Mg(2+) ion per subunit.</text>
</comment>
<comment type="subunit">
    <text evidence="1">Homodimer which binds Holliday junction (HJ) DNA. The HJ becomes 2-fold symmetrical on binding to RuvC with unstacked arms; it has a different conformation from HJ DNA in complex with RuvA. In the full resolvosome a probable DNA-RuvA(4)-RuvB(12)-RuvC(2) complex forms which resolves the HJ.</text>
</comment>
<comment type="subcellular location">
    <subcellularLocation>
        <location evidence="1">Cytoplasm</location>
    </subcellularLocation>
</comment>
<comment type="similarity">
    <text evidence="1">Belongs to the RuvC family.</text>
</comment>
<proteinExistence type="inferred from homology"/>
<gene>
    <name evidence="1" type="primary">ruvC</name>
    <name type="ordered locus">FRAAL2139</name>
</gene>